<accession>B4T4W5</accession>
<feature type="chain" id="PRO_1000138391" description="Flap endonuclease Xni">
    <location>
        <begin position="1"/>
        <end position="251"/>
    </location>
</feature>
<feature type="domain" description="5'-3' exonuclease" evidence="1">
    <location>
        <begin position="160"/>
        <end position="249"/>
    </location>
</feature>
<feature type="region of interest" description="Interaction with DNA" evidence="1">
    <location>
        <begin position="184"/>
        <end position="189"/>
    </location>
</feature>
<feature type="binding site" evidence="1">
    <location>
        <position position="104"/>
    </location>
    <ligand>
        <name>Mg(2+)</name>
        <dbReference type="ChEBI" id="CHEBI:18420"/>
    </ligand>
</feature>
<feature type="binding site" evidence="1">
    <location>
        <position position="171"/>
    </location>
    <ligand>
        <name>K(+)</name>
        <dbReference type="ChEBI" id="CHEBI:29103"/>
    </ligand>
</feature>
<feature type="binding site" evidence="1">
    <location>
        <position position="172"/>
    </location>
    <ligand>
        <name>K(+)</name>
        <dbReference type="ChEBI" id="CHEBI:29103"/>
    </ligand>
</feature>
<feature type="binding site" evidence="1">
    <location>
        <position position="180"/>
    </location>
    <ligand>
        <name>K(+)</name>
        <dbReference type="ChEBI" id="CHEBI:29103"/>
    </ligand>
</feature>
<feature type="binding site" evidence="1">
    <location>
        <position position="182"/>
    </location>
    <ligand>
        <name>K(+)</name>
        <dbReference type="ChEBI" id="CHEBI:29103"/>
    </ligand>
</feature>
<feature type="binding site" evidence="1">
    <location>
        <position position="185"/>
    </location>
    <ligand>
        <name>K(+)</name>
        <dbReference type="ChEBI" id="CHEBI:29103"/>
    </ligand>
</feature>
<protein>
    <recommendedName>
        <fullName evidence="1">Flap endonuclease Xni</fullName>
        <shortName evidence="1">FEN</shortName>
        <ecNumber evidence="1">3.1.-.-</ecNumber>
    </recommendedName>
</protein>
<name>XNI_SALNS</name>
<reference key="1">
    <citation type="journal article" date="2011" name="J. Bacteriol.">
        <title>Comparative genomics of 28 Salmonella enterica isolates: evidence for CRISPR-mediated adaptive sublineage evolution.</title>
        <authorList>
            <person name="Fricke W.F."/>
            <person name="Mammel M.K."/>
            <person name="McDermott P.F."/>
            <person name="Tartera C."/>
            <person name="White D.G."/>
            <person name="Leclerc J.E."/>
            <person name="Ravel J."/>
            <person name="Cebula T.A."/>
        </authorList>
    </citation>
    <scope>NUCLEOTIDE SEQUENCE [LARGE SCALE GENOMIC DNA]</scope>
    <source>
        <strain>SL254</strain>
    </source>
</reference>
<comment type="function">
    <text evidence="1">Has flap endonuclease activity. During DNA replication, flap endonucleases cleave the 5'-overhanging flap structure that is generated by displacement synthesis when DNA polymerase encounters the 5'-end of a downstream Okazaki fragment.</text>
</comment>
<comment type="cofactor">
    <cofactor evidence="1">
        <name>Mg(2+)</name>
        <dbReference type="ChEBI" id="CHEBI:18420"/>
    </cofactor>
    <text evidence="1">Binds 2 Mg(2+) per subunit. Only one magnesium ion has a direct interaction with the protein, the other interactions are indirect.</text>
</comment>
<comment type="cofactor">
    <cofactor evidence="1">
        <name>K(+)</name>
        <dbReference type="ChEBI" id="CHEBI:29103"/>
    </cofactor>
    <text evidence="1">Binds 1 K(+) per subunit. The potassium ion strongly increases the affinity for DNA.</text>
</comment>
<comment type="similarity">
    <text evidence="1">Belongs to the Xni family.</text>
</comment>
<keyword id="KW-0238">DNA-binding</keyword>
<keyword id="KW-0255">Endonuclease</keyword>
<keyword id="KW-0378">Hydrolase</keyword>
<keyword id="KW-0460">Magnesium</keyword>
<keyword id="KW-0479">Metal-binding</keyword>
<keyword id="KW-0540">Nuclease</keyword>
<keyword id="KW-0630">Potassium</keyword>
<proteinExistence type="inferred from homology"/>
<evidence type="ECO:0000255" key="1">
    <source>
        <dbReference type="HAMAP-Rule" id="MF_01192"/>
    </source>
</evidence>
<gene>
    <name evidence="1" type="primary">xni</name>
    <name evidence="1" type="synonym">ygdG</name>
    <name type="ordered locus">SNSL254_A3195</name>
</gene>
<organism>
    <name type="scientific">Salmonella newport (strain SL254)</name>
    <dbReference type="NCBI Taxonomy" id="423368"/>
    <lineage>
        <taxon>Bacteria</taxon>
        <taxon>Pseudomonadati</taxon>
        <taxon>Pseudomonadota</taxon>
        <taxon>Gammaproteobacteria</taxon>
        <taxon>Enterobacterales</taxon>
        <taxon>Enterobacteriaceae</taxon>
        <taxon>Salmonella</taxon>
    </lineage>
</organism>
<dbReference type="EC" id="3.1.-.-" evidence="1"/>
<dbReference type="EMBL" id="CP001113">
    <property type="protein sequence ID" value="ACF64436.1"/>
    <property type="molecule type" value="Genomic_DNA"/>
</dbReference>
<dbReference type="RefSeq" id="WP_001670245.1">
    <property type="nucleotide sequence ID" value="NZ_CCMR01000001.1"/>
</dbReference>
<dbReference type="SMR" id="B4T4W5"/>
<dbReference type="KEGG" id="see:SNSL254_A3195"/>
<dbReference type="HOGENOM" id="CLU_004675_1_2_6"/>
<dbReference type="Proteomes" id="UP000008824">
    <property type="component" value="Chromosome"/>
</dbReference>
<dbReference type="GO" id="GO:0008409">
    <property type="term" value="F:5'-3' exonuclease activity"/>
    <property type="evidence" value="ECO:0007669"/>
    <property type="project" value="InterPro"/>
</dbReference>
<dbReference type="GO" id="GO:0017108">
    <property type="term" value="F:5'-flap endonuclease activity"/>
    <property type="evidence" value="ECO:0007669"/>
    <property type="project" value="UniProtKB-UniRule"/>
</dbReference>
<dbReference type="GO" id="GO:0003677">
    <property type="term" value="F:DNA binding"/>
    <property type="evidence" value="ECO:0007669"/>
    <property type="project" value="UniProtKB-UniRule"/>
</dbReference>
<dbReference type="GO" id="GO:0000287">
    <property type="term" value="F:magnesium ion binding"/>
    <property type="evidence" value="ECO:0007669"/>
    <property type="project" value="UniProtKB-UniRule"/>
</dbReference>
<dbReference type="GO" id="GO:0030955">
    <property type="term" value="F:potassium ion binding"/>
    <property type="evidence" value="ECO:0007669"/>
    <property type="project" value="UniProtKB-UniRule"/>
</dbReference>
<dbReference type="GO" id="GO:0033567">
    <property type="term" value="P:DNA replication, Okazaki fragment processing"/>
    <property type="evidence" value="ECO:0007669"/>
    <property type="project" value="UniProtKB-UniRule"/>
</dbReference>
<dbReference type="CDD" id="cd09898">
    <property type="entry name" value="H3TH_53EXO"/>
    <property type="match status" value="1"/>
</dbReference>
<dbReference type="CDD" id="cd09859">
    <property type="entry name" value="PIN_53EXO"/>
    <property type="match status" value="1"/>
</dbReference>
<dbReference type="FunFam" id="1.10.150.20:FF:000003">
    <property type="entry name" value="DNA polymerase I"/>
    <property type="match status" value="1"/>
</dbReference>
<dbReference type="FunFam" id="3.40.50.1010:FF:000011">
    <property type="entry name" value="Flap endonuclease Xni"/>
    <property type="match status" value="1"/>
</dbReference>
<dbReference type="Gene3D" id="1.10.150.20">
    <property type="entry name" value="5' to 3' exonuclease, C-terminal subdomain"/>
    <property type="match status" value="1"/>
</dbReference>
<dbReference type="Gene3D" id="3.40.50.1010">
    <property type="entry name" value="5'-nuclease"/>
    <property type="match status" value="1"/>
</dbReference>
<dbReference type="HAMAP" id="MF_01192">
    <property type="entry name" value="Xni"/>
    <property type="match status" value="1"/>
</dbReference>
<dbReference type="InterPro" id="IPR020046">
    <property type="entry name" value="5-3_exonucl_a-hlix_arch_N"/>
</dbReference>
<dbReference type="InterPro" id="IPR002421">
    <property type="entry name" value="5-3_exonuclease"/>
</dbReference>
<dbReference type="InterPro" id="IPR036279">
    <property type="entry name" value="5-3_exonuclease_C_sf"/>
</dbReference>
<dbReference type="InterPro" id="IPR020045">
    <property type="entry name" value="DNA_polI_H3TH"/>
</dbReference>
<dbReference type="InterPro" id="IPR038969">
    <property type="entry name" value="FEN"/>
</dbReference>
<dbReference type="InterPro" id="IPR008918">
    <property type="entry name" value="HhH2"/>
</dbReference>
<dbReference type="InterPro" id="IPR029060">
    <property type="entry name" value="PIN-like_dom_sf"/>
</dbReference>
<dbReference type="InterPro" id="IPR022895">
    <property type="entry name" value="Xni"/>
</dbReference>
<dbReference type="NCBIfam" id="NF007017">
    <property type="entry name" value="PRK09482.1"/>
    <property type="match status" value="1"/>
</dbReference>
<dbReference type="PANTHER" id="PTHR42646:SF2">
    <property type="entry name" value="5'-3' EXONUCLEASE FAMILY PROTEIN"/>
    <property type="match status" value="1"/>
</dbReference>
<dbReference type="PANTHER" id="PTHR42646">
    <property type="entry name" value="FLAP ENDONUCLEASE XNI"/>
    <property type="match status" value="1"/>
</dbReference>
<dbReference type="Pfam" id="PF01367">
    <property type="entry name" value="5_3_exonuc"/>
    <property type="match status" value="1"/>
</dbReference>
<dbReference type="Pfam" id="PF02739">
    <property type="entry name" value="5_3_exonuc_N"/>
    <property type="match status" value="1"/>
</dbReference>
<dbReference type="SMART" id="SM00475">
    <property type="entry name" value="53EXOc"/>
    <property type="match status" value="1"/>
</dbReference>
<dbReference type="SMART" id="SM00279">
    <property type="entry name" value="HhH2"/>
    <property type="match status" value="1"/>
</dbReference>
<dbReference type="SUPFAM" id="SSF47807">
    <property type="entry name" value="5' to 3' exonuclease, C-terminal subdomain"/>
    <property type="match status" value="1"/>
</dbReference>
<dbReference type="SUPFAM" id="SSF88723">
    <property type="entry name" value="PIN domain-like"/>
    <property type="match status" value="1"/>
</dbReference>
<sequence length="251" mass="28134">MAAHLLIVDALNLIRRIHAVQGSPCVETCQHALDQLIIHSQPTHAVAVFDDDARSSGWRHQRLPDYKAGRPPMPDDLHNEMPALRAAFEQRGVRCWASDGNEADDLAATLALKVTEAGHQATIVSTDKGYCQLLSPGLRIRDYFQKRWLDAPFIEKEFGVLPRQLPDYWGLAGISSSKVPGVAGIGPKSATQLLIQFQNLEGIYAHPDEVPEKWRKKLETHKEMAFLCRDIARLQTDLHIDGNLQQLRLAR</sequence>